<evidence type="ECO:0000250" key="1">
    <source>
        <dbReference type="UniProtKB" id="P61889"/>
    </source>
</evidence>
<evidence type="ECO:0000250" key="2">
    <source>
        <dbReference type="UniProtKB" id="Q60176"/>
    </source>
</evidence>
<evidence type="ECO:0000269" key="3">
    <source>
    </source>
</evidence>
<evidence type="ECO:0000303" key="4">
    <source>
    </source>
</evidence>
<evidence type="ECO:0000305" key="5"/>
<evidence type="ECO:0000312" key="6">
    <source>
        <dbReference type="EMBL" id="ADL58235.1"/>
    </source>
</evidence>
<gene>
    <name evidence="6" type="primary">mdh</name>
    <name evidence="6" type="ordered locus">MTBMA_c06400</name>
</gene>
<protein>
    <recommendedName>
        <fullName evidence="4">Malate dehydrogenase</fullName>
        <ecNumber evidence="3">1.1.1.299</ecNumber>
    </recommendedName>
    <alternativeName>
        <fullName evidence="4">MdhII</fullName>
    </alternativeName>
</protein>
<feature type="chain" id="PRO_0000436035" description="Malate dehydrogenase">
    <location>
        <begin position="1"/>
        <end position="325"/>
    </location>
</feature>
<feature type="active site" description="Proton acceptor" evidence="1">
    <location>
        <position position="177"/>
    </location>
</feature>
<feature type="binding site" evidence="2">
    <location>
        <begin position="7"/>
        <end position="13"/>
    </location>
    <ligand>
        <name>NADP(+)</name>
        <dbReference type="ChEBI" id="CHEBI:58349"/>
    </ligand>
</feature>
<feature type="binding site" evidence="1">
    <location>
        <position position="84"/>
    </location>
    <ligand>
        <name>substrate</name>
    </ligand>
</feature>
<feature type="binding site" evidence="1">
    <location>
        <position position="90"/>
    </location>
    <ligand>
        <name>substrate</name>
    </ligand>
</feature>
<feature type="binding site" evidence="2">
    <location>
        <position position="97"/>
    </location>
    <ligand>
        <name>NADP(+)</name>
        <dbReference type="ChEBI" id="CHEBI:58349"/>
    </ligand>
</feature>
<feature type="binding site" evidence="2">
    <location>
        <begin position="120"/>
        <end position="122"/>
    </location>
    <ligand>
        <name>NADP(+)</name>
        <dbReference type="ChEBI" id="CHEBI:58349"/>
    </ligand>
</feature>
<feature type="binding site" evidence="1">
    <location>
        <position position="122"/>
    </location>
    <ligand>
        <name>substrate</name>
    </ligand>
</feature>
<feature type="binding site" evidence="1">
    <location>
        <position position="153"/>
    </location>
    <ligand>
        <name>substrate</name>
    </ligand>
</feature>
<feature type="sequence conflict" description="In Ref. 2; AA sequence." evidence="5" ref="2">
    <original>M</original>
    <variation>H</variation>
    <location>
        <position position="1"/>
    </location>
</feature>
<feature type="sequence conflict" description="In Ref. 2; AA sequence." evidence="5" ref="2">
    <location>
        <position position="19"/>
    </location>
</feature>
<reference key="1">
    <citation type="journal article" date="2010" name="J. Bacteriol.">
        <title>Complete genome sequence of Methanothermobacter marburgensis, a methanoarchaeon model organism.</title>
        <authorList>
            <person name="Liesegang H."/>
            <person name="Kaster A.K."/>
            <person name="Wiezer A."/>
            <person name="Goenrich M."/>
            <person name="Wollherr A."/>
            <person name="Seedorf H."/>
            <person name="Gottschalk G."/>
            <person name="Thauer R.K."/>
        </authorList>
    </citation>
    <scope>NUCLEOTIDE SEQUENCE [LARGE SCALE GENOMIC DNA]</scope>
    <source>
        <strain>ATCC BAA-927 / DSM 2133 / JCM 14651 / NBRC 100331 / OCM 82 / Marburg</strain>
    </source>
</reference>
<reference key="2">
    <citation type="journal article" date="1998" name="Arch. Microbiol.">
        <title>Two malate dehydrogenases in Methanobacterium thermoautotrophicum.</title>
        <authorList>
            <person name="Thompson H."/>
            <person name="Tersteegen A."/>
            <person name="Thauer R.K."/>
            <person name="Hedderich R."/>
        </authorList>
    </citation>
    <scope>PROTEIN SEQUENCE OF 1-20</scope>
    <scope>FUNCTION</scope>
    <scope>CATALYTIC ACTIVITY</scope>
    <scope>BIOPHYSICOCHEMICAL PROPERTIES</scope>
    <source>
        <strain>ATCC BAA-927 / DSM 2133 / JCM 14651 / NBRC 100331 / OCM 82 / Marburg</strain>
    </source>
</reference>
<organism>
    <name type="scientific">Methanothermobacter marburgensis (strain ATCC BAA-927 / DSM 2133 / JCM 14651 / NBRC 100331 / OCM 82 / Marburg)</name>
    <name type="common">Methanobacterium thermoautotrophicum</name>
    <dbReference type="NCBI Taxonomy" id="79929"/>
    <lineage>
        <taxon>Archaea</taxon>
        <taxon>Methanobacteriati</taxon>
        <taxon>Methanobacteriota</taxon>
        <taxon>Methanomada group</taxon>
        <taxon>Methanobacteria</taxon>
        <taxon>Methanobacteriales</taxon>
        <taxon>Methanobacteriaceae</taxon>
        <taxon>Methanothermobacter</taxon>
    </lineage>
</organism>
<keyword id="KW-0903">Direct protein sequencing</keyword>
<keyword id="KW-0520">NAD</keyword>
<keyword id="KW-0521">NADP</keyword>
<keyword id="KW-0560">Oxidoreductase</keyword>
<keyword id="KW-0816">Tricarboxylic acid cycle</keyword>
<proteinExistence type="evidence at protein level"/>
<sequence>MKVSIIGSTGRVGRATALCLAEEEAVKTLHLISRRESLEQNIGEVLDMSDALAAKGVSVKLENSADIENVHGSRIVVITAGVPRTADMDRDDLAFQNGVIVAEYARQIARFAPDSIILVVTNPVDVMTYVALKYSGFHPSRVFGLGNHLDSLRLKNYMARHFNVHVSEVHTRVIGQHGPYMVPLISSTSIGGIPIEHYARRDYFSGYRRFDLKKTIEKVINAGSNIISRKGATEYGPAFAISNIVTTILNDERRILTVSTLMEGEIDGIRDVCLGVPVKLGKNGIEGVVPVLMDRDERETFREAASHVRNSTMKVMEFLDEELPL</sequence>
<comment type="function">
    <text evidence="3">Catalyzes the reversible oxidation of malate to oxaloacetate. Can use NAD(+) and NADP(+) with similar specific activity.</text>
</comment>
<comment type="catalytic activity">
    <reaction evidence="3">
        <text>(S)-malate + NADP(+) = oxaloacetate + NADPH + H(+)</text>
        <dbReference type="Rhea" id="RHEA:10824"/>
        <dbReference type="ChEBI" id="CHEBI:15378"/>
        <dbReference type="ChEBI" id="CHEBI:15589"/>
        <dbReference type="ChEBI" id="CHEBI:16452"/>
        <dbReference type="ChEBI" id="CHEBI:57783"/>
        <dbReference type="ChEBI" id="CHEBI:58349"/>
        <dbReference type="EC" id="1.1.1.299"/>
    </reaction>
</comment>
<comment type="catalytic activity">
    <reaction evidence="3">
        <text>(S)-malate + NAD(+) = oxaloacetate + NADH + H(+)</text>
        <dbReference type="Rhea" id="RHEA:21432"/>
        <dbReference type="ChEBI" id="CHEBI:15378"/>
        <dbReference type="ChEBI" id="CHEBI:15589"/>
        <dbReference type="ChEBI" id="CHEBI:16452"/>
        <dbReference type="ChEBI" id="CHEBI:57540"/>
        <dbReference type="ChEBI" id="CHEBI:57945"/>
        <dbReference type="EC" id="1.1.1.299"/>
    </reaction>
</comment>
<comment type="biophysicochemical properties">
    <kinetics>
        <KM evidence="3">0.03 mM for oxaloacetate</KM>
        <KM evidence="3">0.09 mM for NADH</KM>
        <KM evidence="3">0.02 mM for NADPH</KM>
        <KM evidence="3">1 mM for malate</KM>
        <KM evidence="3">0.5 mM for NAD(+)</KM>
    </kinetics>
</comment>
<comment type="similarity">
    <text evidence="5">Belongs to the LDH/MDH superfamily.</text>
</comment>
<name>MDH_METTM</name>
<dbReference type="EC" id="1.1.1.299" evidence="3"/>
<dbReference type="EMBL" id="CP001710">
    <property type="protein sequence ID" value="ADL58235.1"/>
    <property type="molecule type" value="Genomic_DNA"/>
</dbReference>
<dbReference type="RefSeq" id="WP_013295459.1">
    <property type="nucleotide sequence ID" value="NC_014408.1"/>
</dbReference>
<dbReference type="SMR" id="D9PVI7"/>
<dbReference type="STRING" id="79929.MTBMA_c06400"/>
<dbReference type="PaxDb" id="79929-MTBMA_c06400"/>
<dbReference type="GeneID" id="77399421"/>
<dbReference type="GeneID" id="9704348"/>
<dbReference type="KEGG" id="mmg:MTBMA_c06400"/>
<dbReference type="PATRIC" id="fig|79929.8.peg.624"/>
<dbReference type="HOGENOM" id="CLU_045401_2_2_2"/>
<dbReference type="OrthoDB" id="2596at2157"/>
<dbReference type="SABIO-RK" id="D9PVI7"/>
<dbReference type="Proteomes" id="UP000000345">
    <property type="component" value="Chromosome"/>
</dbReference>
<dbReference type="GO" id="GO:0004459">
    <property type="term" value="F:L-lactate dehydrogenase activity"/>
    <property type="evidence" value="ECO:0007669"/>
    <property type="project" value="TreeGrafter"/>
</dbReference>
<dbReference type="GO" id="GO:0030060">
    <property type="term" value="F:L-malate dehydrogenase (NAD+) activity"/>
    <property type="evidence" value="ECO:0007669"/>
    <property type="project" value="RHEA"/>
</dbReference>
<dbReference type="GO" id="GO:0046554">
    <property type="term" value="F:L-malate dehydrogenase (NADP+) activity"/>
    <property type="evidence" value="ECO:0007669"/>
    <property type="project" value="RHEA"/>
</dbReference>
<dbReference type="GO" id="GO:0006089">
    <property type="term" value="P:lactate metabolic process"/>
    <property type="evidence" value="ECO:0007669"/>
    <property type="project" value="TreeGrafter"/>
</dbReference>
<dbReference type="GO" id="GO:0006099">
    <property type="term" value="P:tricarboxylic acid cycle"/>
    <property type="evidence" value="ECO:0007669"/>
    <property type="project" value="UniProtKB-KW"/>
</dbReference>
<dbReference type="CDD" id="cd05294">
    <property type="entry name" value="LDH-like_MDH_nadp"/>
    <property type="match status" value="1"/>
</dbReference>
<dbReference type="Gene3D" id="3.90.110.10">
    <property type="entry name" value="Lactate dehydrogenase/glycoside hydrolase, family 4, C-terminal"/>
    <property type="match status" value="1"/>
</dbReference>
<dbReference type="Gene3D" id="3.40.50.720">
    <property type="entry name" value="NAD(P)-binding Rossmann-like Domain"/>
    <property type="match status" value="1"/>
</dbReference>
<dbReference type="InterPro" id="IPR001557">
    <property type="entry name" value="L-lactate/malate_DH"/>
</dbReference>
<dbReference type="InterPro" id="IPR022383">
    <property type="entry name" value="Lactate/malate_DH_C"/>
</dbReference>
<dbReference type="InterPro" id="IPR001236">
    <property type="entry name" value="Lactate/malate_DH_N"/>
</dbReference>
<dbReference type="InterPro" id="IPR015955">
    <property type="entry name" value="Lactate_DH/Glyco_Ohase_4_C"/>
</dbReference>
<dbReference type="InterPro" id="IPR036291">
    <property type="entry name" value="NAD(P)-bd_dom_sf"/>
</dbReference>
<dbReference type="NCBIfam" id="NF004863">
    <property type="entry name" value="PRK06223.1"/>
    <property type="match status" value="1"/>
</dbReference>
<dbReference type="PANTHER" id="PTHR43128">
    <property type="entry name" value="L-2-HYDROXYCARBOXYLATE DEHYDROGENASE (NAD(P)(+))"/>
    <property type="match status" value="1"/>
</dbReference>
<dbReference type="PANTHER" id="PTHR43128:SF16">
    <property type="entry name" value="L-LACTATE DEHYDROGENASE"/>
    <property type="match status" value="1"/>
</dbReference>
<dbReference type="Pfam" id="PF02866">
    <property type="entry name" value="Ldh_1_C"/>
    <property type="match status" value="1"/>
</dbReference>
<dbReference type="Pfam" id="PF00056">
    <property type="entry name" value="Ldh_1_N"/>
    <property type="match status" value="1"/>
</dbReference>
<dbReference type="PIRSF" id="PIRSF000102">
    <property type="entry name" value="Lac_mal_DH"/>
    <property type="match status" value="1"/>
</dbReference>
<dbReference type="PRINTS" id="PR00086">
    <property type="entry name" value="LLDHDRGNASE"/>
</dbReference>
<dbReference type="SUPFAM" id="SSF56327">
    <property type="entry name" value="LDH C-terminal domain-like"/>
    <property type="match status" value="1"/>
</dbReference>
<dbReference type="SUPFAM" id="SSF51735">
    <property type="entry name" value="NAD(P)-binding Rossmann-fold domains"/>
    <property type="match status" value="1"/>
</dbReference>
<accession>D9PVI7</accession>